<name>NRDR_VIBPA</name>
<protein>
    <recommendedName>
        <fullName evidence="1">Transcriptional repressor NrdR</fullName>
    </recommendedName>
</protein>
<feature type="chain" id="PRO_0000182378" description="Transcriptional repressor NrdR">
    <location>
        <begin position="1"/>
        <end position="149"/>
    </location>
</feature>
<feature type="domain" description="ATP-cone" evidence="1">
    <location>
        <begin position="49"/>
        <end position="139"/>
    </location>
</feature>
<feature type="zinc finger region" evidence="1">
    <location>
        <begin position="3"/>
        <end position="34"/>
    </location>
</feature>
<accession>Q87RU8</accession>
<gene>
    <name evidence="1" type="primary">nrdR</name>
    <name type="ordered locus">VP0678</name>
</gene>
<sequence>MHCPFCSENDTKVIDSRLVADGHQVRRRRQCLACSERFTTFETAELVMPKVIKSNGNREPFDEDKMVGGIQRALEKRPVSADSIELAISMIKSQLRATGEREVPSQMIGNLVMDQLKELDKVAYIRFASVYRSFEDIREFGEEIARLED</sequence>
<comment type="function">
    <text evidence="1">Negatively regulates transcription of bacterial ribonucleotide reductase nrd genes and operons by binding to NrdR-boxes.</text>
</comment>
<comment type="cofactor">
    <cofactor evidence="1">
        <name>Zn(2+)</name>
        <dbReference type="ChEBI" id="CHEBI:29105"/>
    </cofactor>
    <text evidence="1">Binds 1 zinc ion.</text>
</comment>
<comment type="similarity">
    <text evidence="1">Belongs to the NrdR family.</text>
</comment>
<reference key="1">
    <citation type="journal article" date="2003" name="Lancet">
        <title>Genome sequence of Vibrio parahaemolyticus: a pathogenic mechanism distinct from that of V. cholerae.</title>
        <authorList>
            <person name="Makino K."/>
            <person name="Oshima K."/>
            <person name="Kurokawa K."/>
            <person name="Yokoyama K."/>
            <person name="Uda T."/>
            <person name="Tagomori K."/>
            <person name="Iijima Y."/>
            <person name="Najima M."/>
            <person name="Nakano M."/>
            <person name="Yamashita A."/>
            <person name="Kubota Y."/>
            <person name="Kimura S."/>
            <person name="Yasunaga T."/>
            <person name="Honda T."/>
            <person name="Shinagawa H."/>
            <person name="Hattori M."/>
            <person name="Iida T."/>
        </authorList>
    </citation>
    <scope>NUCLEOTIDE SEQUENCE [LARGE SCALE GENOMIC DNA]</scope>
    <source>
        <strain>RIMD 2210633</strain>
    </source>
</reference>
<keyword id="KW-0067">ATP-binding</keyword>
<keyword id="KW-0238">DNA-binding</keyword>
<keyword id="KW-0479">Metal-binding</keyword>
<keyword id="KW-0547">Nucleotide-binding</keyword>
<keyword id="KW-0678">Repressor</keyword>
<keyword id="KW-0804">Transcription</keyword>
<keyword id="KW-0805">Transcription regulation</keyword>
<keyword id="KW-0862">Zinc</keyword>
<keyword id="KW-0863">Zinc-finger</keyword>
<evidence type="ECO:0000255" key="1">
    <source>
        <dbReference type="HAMAP-Rule" id="MF_00440"/>
    </source>
</evidence>
<organism>
    <name type="scientific">Vibrio parahaemolyticus serotype O3:K6 (strain RIMD 2210633)</name>
    <dbReference type="NCBI Taxonomy" id="223926"/>
    <lineage>
        <taxon>Bacteria</taxon>
        <taxon>Pseudomonadati</taxon>
        <taxon>Pseudomonadota</taxon>
        <taxon>Gammaproteobacteria</taxon>
        <taxon>Vibrionales</taxon>
        <taxon>Vibrionaceae</taxon>
        <taxon>Vibrio</taxon>
    </lineage>
</organism>
<dbReference type="EMBL" id="BA000031">
    <property type="protein sequence ID" value="BAC58941.1"/>
    <property type="molecule type" value="Genomic_DNA"/>
</dbReference>
<dbReference type="RefSeq" id="NP_797057.1">
    <property type="nucleotide sequence ID" value="NC_004603.1"/>
</dbReference>
<dbReference type="RefSeq" id="WP_005482986.1">
    <property type="nucleotide sequence ID" value="NC_004603.1"/>
</dbReference>
<dbReference type="SMR" id="Q87RU8"/>
<dbReference type="GeneID" id="1188153"/>
<dbReference type="KEGG" id="vpa:VP0678"/>
<dbReference type="PATRIC" id="fig|223926.6.peg.646"/>
<dbReference type="eggNOG" id="COG1327">
    <property type="taxonomic scope" value="Bacteria"/>
</dbReference>
<dbReference type="HOGENOM" id="CLU_108412_0_0_6"/>
<dbReference type="Proteomes" id="UP000002493">
    <property type="component" value="Chromosome 1"/>
</dbReference>
<dbReference type="GO" id="GO:0005524">
    <property type="term" value="F:ATP binding"/>
    <property type="evidence" value="ECO:0007669"/>
    <property type="project" value="UniProtKB-KW"/>
</dbReference>
<dbReference type="GO" id="GO:0003677">
    <property type="term" value="F:DNA binding"/>
    <property type="evidence" value="ECO:0007669"/>
    <property type="project" value="UniProtKB-KW"/>
</dbReference>
<dbReference type="GO" id="GO:0008270">
    <property type="term" value="F:zinc ion binding"/>
    <property type="evidence" value="ECO:0007669"/>
    <property type="project" value="UniProtKB-UniRule"/>
</dbReference>
<dbReference type="GO" id="GO:0045892">
    <property type="term" value="P:negative regulation of DNA-templated transcription"/>
    <property type="evidence" value="ECO:0007669"/>
    <property type="project" value="UniProtKB-UniRule"/>
</dbReference>
<dbReference type="HAMAP" id="MF_00440">
    <property type="entry name" value="NrdR"/>
    <property type="match status" value="1"/>
</dbReference>
<dbReference type="InterPro" id="IPR005144">
    <property type="entry name" value="ATP-cone_dom"/>
</dbReference>
<dbReference type="InterPro" id="IPR055173">
    <property type="entry name" value="NrdR-like_N"/>
</dbReference>
<dbReference type="InterPro" id="IPR003796">
    <property type="entry name" value="RNR_NrdR-like"/>
</dbReference>
<dbReference type="NCBIfam" id="TIGR00244">
    <property type="entry name" value="transcriptional regulator NrdR"/>
    <property type="match status" value="1"/>
</dbReference>
<dbReference type="PANTHER" id="PTHR30455">
    <property type="entry name" value="TRANSCRIPTIONAL REPRESSOR NRDR"/>
    <property type="match status" value="1"/>
</dbReference>
<dbReference type="PANTHER" id="PTHR30455:SF2">
    <property type="entry name" value="TRANSCRIPTIONAL REPRESSOR NRDR"/>
    <property type="match status" value="1"/>
</dbReference>
<dbReference type="Pfam" id="PF03477">
    <property type="entry name" value="ATP-cone"/>
    <property type="match status" value="1"/>
</dbReference>
<dbReference type="Pfam" id="PF22811">
    <property type="entry name" value="Zn_ribbon_NrdR"/>
    <property type="match status" value="1"/>
</dbReference>
<dbReference type="PROSITE" id="PS51161">
    <property type="entry name" value="ATP_CONE"/>
    <property type="match status" value="1"/>
</dbReference>
<proteinExistence type="inferred from homology"/>